<sequence length="125" mass="14727">MEYQFTHSIHGVVAKCSMDHEAFARWLNAEITENPSQLAPIFAEIEKCRAAFPNHYECVFEGREYSLYFDYDEVMAKANNLDAAFDDEEMEEGFQFYNEESIAFCGLDDFEKFLKAYQHFVQTYH</sequence>
<dbReference type="EMBL" id="U46781">
    <property type="protein sequence ID" value="AAC44665.1"/>
    <property type="molecule type" value="Genomic_DNA"/>
</dbReference>
<dbReference type="RefSeq" id="WP_006248055.1">
    <property type="nucleotide sequence ID" value="NZ_VAJK01000017.1"/>
</dbReference>
<dbReference type="STRING" id="75985.WC39_04940"/>
<dbReference type="GeneID" id="67368646"/>
<dbReference type="OrthoDB" id="5739292at2"/>
<dbReference type="HAMAP" id="MF_01053">
    <property type="entry name" value="UPF0231"/>
    <property type="match status" value="1"/>
</dbReference>
<dbReference type="InterPro" id="IPR008249">
    <property type="entry name" value="UPF0231"/>
</dbReference>
<dbReference type="NCBIfam" id="NF003575">
    <property type="entry name" value="PRK05248.1-2"/>
    <property type="match status" value="1"/>
</dbReference>
<dbReference type="Pfam" id="PF06062">
    <property type="entry name" value="UPF0231"/>
    <property type="match status" value="1"/>
</dbReference>
<dbReference type="PIRSF" id="PIRSF006287">
    <property type="entry name" value="UCP006287"/>
    <property type="match status" value="1"/>
</dbReference>
<accession>P95509</accession>
<reference key="1">
    <citation type="journal article" date="1996" name="Gene">
        <title>The restriction-modification system of Pasteurella haemolytica is a member of a new family of type I enzymes.</title>
        <authorList>
            <person name="Highlander S.K."/>
            <person name="Garza O."/>
        </authorList>
    </citation>
    <scope>NUCLEOTIDE SEQUENCE [GENOMIC DNA]</scope>
    <source>
        <strain>Serotype A1 / PH101</strain>
    </source>
</reference>
<evidence type="ECO:0000305" key="1"/>
<organism>
    <name type="scientific">Mannheimia haemolytica</name>
    <name type="common">Pasteurella haemolytica</name>
    <dbReference type="NCBI Taxonomy" id="75985"/>
    <lineage>
        <taxon>Bacteria</taxon>
        <taxon>Pseudomonadati</taxon>
        <taxon>Pseudomonadota</taxon>
        <taxon>Gammaproteobacteria</taxon>
        <taxon>Pasteurellales</taxon>
        <taxon>Pasteurellaceae</taxon>
        <taxon>Mannheimia</taxon>
    </lineage>
</organism>
<feature type="chain" id="PRO_0000214651" description="UPF0231 protein in hemN 3'region">
    <location>
        <begin position="1"/>
        <end position="125"/>
    </location>
</feature>
<name>YHEN_MANHA</name>
<protein>
    <recommendedName>
        <fullName>UPF0231 protein in hemN 3'region</fullName>
    </recommendedName>
    <alternativeName>
        <fullName>orf1</fullName>
    </alternativeName>
</protein>
<comment type="similarity">
    <text evidence="1">Belongs to the UPF0231 family.</text>
</comment>
<proteinExistence type="inferred from homology"/>